<organism>
    <name type="scientific">Xenopus tropicalis</name>
    <name type="common">Western clawed frog</name>
    <name type="synonym">Silurana tropicalis</name>
    <dbReference type="NCBI Taxonomy" id="8364"/>
    <lineage>
        <taxon>Eukaryota</taxon>
        <taxon>Metazoa</taxon>
        <taxon>Chordata</taxon>
        <taxon>Craniata</taxon>
        <taxon>Vertebrata</taxon>
        <taxon>Euteleostomi</taxon>
        <taxon>Amphibia</taxon>
        <taxon>Batrachia</taxon>
        <taxon>Anura</taxon>
        <taxon>Pipoidea</taxon>
        <taxon>Pipidae</taxon>
        <taxon>Xenopodinae</taxon>
        <taxon>Xenopus</taxon>
        <taxon>Silurana</taxon>
    </lineage>
</organism>
<feature type="initiator methionine" description="Removed" evidence="3">
    <location>
        <position position="1"/>
    </location>
</feature>
<feature type="chain" id="PRO_0000392433" description="Superoxide dismutase [Cu-Zn]" evidence="3">
    <location>
        <begin position="2"/>
        <end position="151"/>
    </location>
</feature>
<feature type="binding site" evidence="3">
    <location>
        <position position="45"/>
    </location>
    <ligand>
        <name>Cu cation</name>
        <dbReference type="ChEBI" id="CHEBI:23378"/>
        <note>catalytic</note>
    </ligand>
</feature>
<feature type="binding site" evidence="3">
    <location>
        <position position="47"/>
    </location>
    <ligand>
        <name>Cu cation</name>
        <dbReference type="ChEBI" id="CHEBI:23378"/>
        <note>catalytic</note>
    </ligand>
</feature>
<feature type="binding site" evidence="3">
    <location>
        <position position="62"/>
    </location>
    <ligand>
        <name>Cu cation</name>
        <dbReference type="ChEBI" id="CHEBI:23378"/>
        <note>catalytic</note>
    </ligand>
</feature>
<feature type="binding site" evidence="3">
    <location>
        <position position="62"/>
    </location>
    <ligand>
        <name>Zn(2+)</name>
        <dbReference type="ChEBI" id="CHEBI:29105"/>
        <note>structural</note>
    </ligand>
</feature>
<feature type="binding site" evidence="3">
    <location>
        <position position="70"/>
    </location>
    <ligand>
        <name>Zn(2+)</name>
        <dbReference type="ChEBI" id="CHEBI:29105"/>
        <note>structural</note>
    </ligand>
</feature>
<feature type="binding site" evidence="3">
    <location>
        <position position="79"/>
    </location>
    <ligand>
        <name>Zn(2+)</name>
        <dbReference type="ChEBI" id="CHEBI:29105"/>
        <note>structural</note>
    </ligand>
</feature>
<feature type="binding site" evidence="3">
    <location>
        <position position="82"/>
    </location>
    <ligand>
        <name>Zn(2+)</name>
        <dbReference type="ChEBI" id="CHEBI:29105"/>
        <note>structural</note>
    </ligand>
</feature>
<feature type="binding site" evidence="3">
    <location>
        <position position="118"/>
    </location>
    <ligand>
        <name>Cu cation</name>
        <dbReference type="ChEBI" id="CHEBI:23378"/>
        <note>catalytic</note>
    </ligand>
</feature>
<feature type="lipid moiety-binding region" description="S-palmitoyl cysteine" evidence="1">
    <location>
        <position position="6"/>
    </location>
</feature>
<feature type="disulfide bond" evidence="3">
    <location>
        <begin position="56"/>
        <end position="144"/>
    </location>
</feature>
<reference evidence="5" key="1">
    <citation type="submission" date="2006-08" db="EMBL/GenBank/DDBJ databases">
        <authorList>
            <consortium name="NIH - Xenopus Gene Collection (XGC) project"/>
        </authorList>
    </citation>
    <scope>NUCLEOTIDE SEQUENCE [LARGE SCALE MRNA]</scope>
    <source>
        <strain evidence="5">N6</strain>
        <tissue evidence="5">Oviduct</tissue>
    </source>
</reference>
<sequence length="151" mass="15698">MVRAVCVLAGSGDVKGVVHFQQQDEGPVTVEGKIYGLTDGKHGFHIHEFGDNTNGCISAGPHFNPESKTHGAPEDAVRHVGDLGNVTAKDGVAEFKLTDSLISLKGNHSIIGRCAVVHEKEDDLGKGGNDESLKTGNAGGRLACGVIGLCQ</sequence>
<keyword id="KW-0049">Antioxidant</keyword>
<keyword id="KW-0186">Copper</keyword>
<keyword id="KW-0963">Cytoplasm</keyword>
<keyword id="KW-1015">Disulfide bond</keyword>
<keyword id="KW-0449">Lipoprotein</keyword>
<keyword id="KW-0479">Metal-binding</keyword>
<keyword id="KW-0539">Nucleus</keyword>
<keyword id="KW-0560">Oxidoreductase</keyword>
<keyword id="KW-0564">Palmitate</keyword>
<keyword id="KW-1185">Reference proteome</keyword>
<keyword id="KW-0862">Zinc</keyword>
<comment type="function">
    <text evidence="3">Destroys radicals which are normally produced within the cells and which are toxic to biological systems.</text>
</comment>
<comment type="catalytic activity">
    <reaction evidence="3">
        <text>2 superoxide + 2 H(+) = H2O2 + O2</text>
        <dbReference type="Rhea" id="RHEA:20696"/>
        <dbReference type="ChEBI" id="CHEBI:15378"/>
        <dbReference type="ChEBI" id="CHEBI:15379"/>
        <dbReference type="ChEBI" id="CHEBI:16240"/>
        <dbReference type="ChEBI" id="CHEBI:18421"/>
        <dbReference type="EC" id="1.15.1.1"/>
    </reaction>
</comment>
<comment type="cofactor">
    <cofactor evidence="3">
        <name>Cu cation</name>
        <dbReference type="ChEBI" id="CHEBI:23378"/>
    </cofactor>
    <text evidence="3">Binds 1 copper ion per subunit.</text>
</comment>
<comment type="cofactor">
    <cofactor evidence="3">
        <name>Zn(2+)</name>
        <dbReference type="ChEBI" id="CHEBI:29105"/>
    </cofactor>
    <text evidence="3">Binds 1 zinc ion per subunit.</text>
</comment>
<comment type="subunit">
    <text evidence="2">Homodimer.</text>
</comment>
<comment type="subcellular location">
    <subcellularLocation>
        <location evidence="3">Cytoplasm</location>
    </subcellularLocation>
    <subcellularLocation>
        <location evidence="1">Nucleus</location>
    </subcellularLocation>
</comment>
<comment type="similarity">
    <text evidence="4">Belongs to the Cu-Zn superoxide dismutase family.</text>
</comment>
<evidence type="ECO:0000250" key="1"/>
<evidence type="ECO:0000250" key="2">
    <source>
        <dbReference type="UniProtKB" id="P00441"/>
    </source>
</evidence>
<evidence type="ECO:0000250" key="3">
    <source>
        <dbReference type="UniProtKB" id="P15107"/>
    </source>
</evidence>
<evidence type="ECO:0000255" key="4"/>
<evidence type="ECO:0000312" key="5">
    <source>
        <dbReference type="EMBL" id="AAI21541.1"/>
    </source>
</evidence>
<dbReference type="EC" id="1.15.1.1"/>
<dbReference type="EMBL" id="BC121540">
    <property type="protein sequence ID" value="AAI21541.1"/>
    <property type="molecule type" value="mRNA"/>
</dbReference>
<dbReference type="RefSeq" id="NP_001016252.1">
    <property type="nucleotide sequence ID" value="NM_001016252.2"/>
</dbReference>
<dbReference type="SMR" id="Q0IIW3"/>
<dbReference type="FunCoup" id="Q0IIW3">
    <property type="interactions" value="1519"/>
</dbReference>
<dbReference type="STRING" id="8364.ENSXETP00000002201"/>
<dbReference type="PaxDb" id="8364-ENSXETP00000015994"/>
<dbReference type="DNASU" id="549006"/>
<dbReference type="GeneID" id="549006"/>
<dbReference type="KEGG" id="xtr:549006"/>
<dbReference type="AGR" id="Xenbase:XB-GENE-1006488"/>
<dbReference type="CTD" id="6647"/>
<dbReference type="Xenbase" id="XB-GENE-1006488">
    <property type="gene designation" value="sod1"/>
</dbReference>
<dbReference type="eggNOG" id="KOG0441">
    <property type="taxonomic scope" value="Eukaryota"/>
</dbReference>
<dbReference type="HOGENOM" id="CLU_056632_4_1_1"/>
<dbReference type="InParanoid" id="Q0IIW3"/>
<dbReference type="OMA" id="AQRGFHI"/>
<dbReference type="OrthoDB" id="2015551at2759"/>
<dbReference type="Reactome" id="R-XTR-114608">
    <property type="pathway name" value="Platelet degranulation"/>
</dbReference>
<dbReference type="Reactome" id="R-XTR-3299685">
    <property type="pathway name" value="Detoxification of Reactive Oxygen Species"/>
</dbReference>
<dbReference type="Proteomes" id="UP000008143">
    <property type="component" value="Chromosome 2"/>
</dbReference>
<dbReference type="Bgee" id="ENSXETG00000007350">
    <property type="expression patterns" value="Expressed in mesonephros and 16 other cell types or tissues"/>
</dbReference>
<dbReference type="ExpressionAtlas" id="Q0IIW3">
    <property type="expression patterns" value="baseline"/>
</dbReference>
<dbReference type="GO" id="GO:0005737">
    <property type="term" value="C:cytoplasm"/>
    <property type="evidence" value="ECO:0007669"/>
    <property type="project" value="UniProtKB-SubCell"/>
</dbReference>
<dbReference type="GO" id="GO:0005634">
    <property type="term" value="C:nucleus"/>
    <property type="evidence" value="ECO:0007669"/>
    <property type="project" value="UniProtKB-SubCell"/>
</dbReference>
<dbReference type="GO" id="GO:0005507">
    <property type="term" value="F:copper ion binding"/>
    <property type="evidence" value="ECO:0007669"/>
    <property type="project" value="InterPro"/>
</dbReference>
<dbReference type="GO" id="GO:0004784">
    <property type="term" value="F:superoxide dismutase activity"/>
    <property type="evidence" value="ECO:0007669"/>
    <property type="project" value="UniProtKB-EC"/>
</dbReference>
<dbReference type="CDD" id="cd00305">
    <property type="entry name" value="Cu-Zn_Superoxide_Dismutase"/>
    <property type="match status" value="1"/>
</dbReference>
<dbReference type="FunFam" id="2.60.40.200:FF:000001">
    <property type="entry name" value="Superoxide dismutase [Cu-Zn]"/>
    <property type="match status" value="1"/>
</dbReference>
<dbReference type="Gene3D" id="2.60.40.200">
    <property type="entry name" value="Superoxide dismutase, copper/zinc binding domain"/>
    <property type="match status" value="1"/>
</dbReference>
<dbReference type="InterPro" id="IPR036423">
    <property type="entry name" value="SOD-like_Cu/Zn_dom_sf"/>
</dbReference>
<dbReference type="InterPro" id="IPR024134">
    <property type="entry name" value="SOD_Cu/Zn_/chaperone"/>
</dbReference>
<dbReference type="InterPro" id="IPR018152">
    <property type="entry name" value="SOD_Cu/Zn_BS"/>
</dbReference>
<dbReference type="InterPro" id="IPR001424">
    <property type="entry name" value="SOD_Cu_Zn_dom"/>
</dbReference>
<dbReference type="PANTHER" id="PTHR10003">
    <property type="entry name" value="SUPEROXIDE DISMUTASE CU-ZN -RELATED"/>
    <property type="match status" value="1"/>
</dbReference>
<dbReference type="Pfam" id="PF00080">
    <property type="entry name" value="Sod_Cu"/>
    <property type="match status" value="1"/>
</dbReference>
<dbReference type="PRINTS" id="PR00068">
    <property type="entry name" value="CUZNDISMTASE"/>
</dbReference>
<dbReference type="SUPFAM" id="SSF49329">
    <property type="entry name" value="Cu,Zn superoxide dismutase-like"/>
    <property type="match status" value="1"/>
</dbReference>
<dbReference type="PROSITE" id="PS00087">
    <property type="entry name" value="SOD_CU_ZN_1"/>
    <property type="match status" value="1"/>
</dbReference>
<dbReference type="PROSITE" id="PS00332">
    <property type="entry name" value="SOD_CU_ZN_2"/>
    <property type="match status" value="1"/>
</dbReference>
<protein>
    <recommendedName>
        <fullName evidence="2">Superoxide dismutase [Cu-Zn]</fullName>
        <ecNumber>1.15.1.1</ecNumber>
    </recommendedName>
</protein>
<name>SODC_XENTR</name>
<accession>Q0IIW3</accession>
<proteinExistence type="evidence at transcript level"/>
<gene>
    <name type="primary">sod1</name>
</gene>